<accession>B9KME7</accession>
<reference key="1">
    <citation type="journal article" date="2009" name="J. Bacteriol.">
        <title>Complete genome sequence of Rhodobacter sphaeroides KD131.</title>
        <authorList>
            <person name="Lim S.-K."/>
            <person name="Kim S.J."/>
            <person name="Cha S.H."/>
            <person name="Oh Y.-K."/>
            <person name="Rhee H.-J."/>
            <person name="Kim M.-S."/>
            <person name="Lee J.K."/>
        </authorList>
    </citation>
    <scope>NUCLEOTIDE SEQUENCE [LARGE SCALE GENOMIC DNA]</scope>
    <source>
        <strain>KD131 / KCTC 12085</strain>
    </source>
</reference>
<proteinExistence type="inferred from homology"/>
<evidence type="ECO:0000255" key="1">
    <source>
        <dbReference type="HAMAP-Rule" id="MF_00044"/>
    </source>
</evidence>
<organism>
    <name type="scientific">Cereibacter sphaeroides (strain KD131 / KCTC 12085)</name>
    <name type="common">Rhodobacter sphaeroides</name>
    <dbReference type="NCBI Taxonomy" id="557760"/>
    <lineage>
        <taxon>Bacteria</taxon>
        <taxon>Pseudomonadati</taxon>
        <taxon>Pseudomonadota</taxon>
        <taxon>Alphaproteobacteria</taxon>
        <taxon>Rhodobacterales</taxon>
        <taxon>Paracoccaceae</taxon>
        <taxon>Cereibacter</taxon>
    </lineage>
</organism>
<name>SYDND_CERSK</name>
<sequence length="591" mass="66372">MHAYRSHTCTELNAAHVGQEVRLSGWVHRVRDHGGVLFLDLRDHYGITQVIADADSPAFAELETVRAEWVIRIEGRVKARDASLVNPKLATGEIEVYATGMSVLGAADELPLPVFGETDYPEETRLTYRFLDLRREKLHQNMMLRSNVVRSLRNRMWGAGFNEFQTPIITASSPEGARDFLVPSRLHPGKFYALPQAPQQFKQLIMVAGFDRYFQIAPCFRDEDPRADRSPTDFYQLDIEMSFVEQEDVFAAVQPVIQGLFEEFGHGKRVEADWPRIAYRDAMLWYGSDKPDLRNPIKMQVVSEHFAGSGFAIFAKLLENEGTEIRAIPAPTGGSRKFCDRMNAFAQSQGLPGMGYIFWRKGDDGAMEAAGPLAKNIGPERTEAIRQQLGLGEGDAAFFLGGKPETFEAVAGRARTEIGRELGLTEENCFKFAWIVDFPMYEKDDEGKIDFSHNPFSMPQGGMEALEGDPLKVHAYQYDLACNGYELISGGIRNHKPEIMFKAFELAGYPKEEVEKRFGGMVKAFRYGAPPHGGCAAGIDRIVMLLADEANIREVIMFPMNQRAEDLLMGAPSEPTNEQLRELRLRVVPKD</sequence>
<dbReference type="EC" id="6.1.1.23" evidence="1"/>
<dbReference type="EMBL" id="CP001150">
    <property type="protein sequence ID" value="ACM02038.1"/>
    <property type="molecule type" value="Genomic_DNA"/>
</dbReference>
<dbReference type="RefSeq" id="WP_015921242.1">
    <property type="nucleotide sequence ID" value="NC_011963.1"/>
</dbReference>
<dbReference type="SMR" id="B9KME7"/>
<dbReference type="GeneID" id="67447568"/>
<dbReference type="KEGG" id="rsk:RSKD131_2178"/>
<dbReference type="HOGENOM" id="CLU_014330_3_2_5"/>
<dbReference type="GO" id="GO:0005737">
    <property type="term" value="C:cytoplasm"/>
    <property type="evidence" value="ECO:0007669"/>
    <property type="project" value="UniProtKB-SubCell"/>
</dbReference>
<dbReference type="GO" id="GO:0004815">
    <property type="term" value="F:aspartate-tRNA ligase activity"/>
    <property type="evidence" value="ECO:0007669"/>
    <property type="project" value="UniProtKB-UniRule"/>
</dbReference>
<dbReference type="GO" id="GO:0050560">
    <property type="term" value="F:aspartate-tRNA(Asn) ligase activity"/>
    <property type="evidence" value="ECO:0007669"/>
    <property type="project" value="UniProtKB-EC"/>
</dbReference>
<dbReference type="GO" id="GO:0005524">
    <property type="term" value="F:ATP binding"/>
    <property type="evidence" value="ECO:0007669"/>
    <property type="project" value="UniProtKB-UniRule"/>
</dbReference>
<dbReference type="GO" id="GO:0003676">
    <property type="term" value="F:nucleic acid binding"/>
    <property type="evidence" value="ECO:0007669"/>
    <property type="project" value="InterPro"/>
</dbReference>
<dbReference type="GO" id="GO:0006422">
    <property type="term" value="P:aspartyl-tRNA aminoacylation"/>
    <property type="evidence" value="ECO:0007669"/>
    <property type="project" value="UniProtKB-UniRule"/>
</dbReference>
<dbReference type="CDD" id="cd04317">
    <property type="entry name" value="EcAspRS_like_N"/>
    <property type="match status" value="1"/>
</dbReference>
<dbReference type="Gene3D" id="3.30.930.10">
    <property type="entry name" value="Bira Bifunctional Protein, Domain 2"/>
    <property type="match status" value="1"/>
</dbReference>
<dbReference type="Gene3D" id="3.30.1360.30">
    <property type="entry name" value="GAD-like domain"/>
    <property type="match status" value="1"/>
</dbReference>
<dbReference type="Gene3D" id="2.40.50.140">
    <property type="entry name" value="Nucleic acid-binding proteins"/>
    <property type="match status" value="1"/>
</dbReference>
<dbReference type="HAMAP" id="MF_00044">
    <property type="entry name" value="Asp_tRNA_synth_type1"/>
    <property type="match status" value="1"/>
</dbReference>
<dbReference type="InterPro" id="IPR004364">
    <property type="entry name" value="Aa-tRNA-synt_II"/>
</dbReference>
<dbReference type="InterPro" id="IPR006195">
    <property type="entry name" value="aa-tRNA-synth_II"/>
</dbReference>
<dbReference type="InterPro" id="IPR045864">
    <property type="entry name" value="aa-tRNA-synth_II/BPL/LPL"/>
</dbReference>
<dbReference type="InterPro" id="IPR004524">
    <property type="entry name" value="Asp-tRNA-ligase_1"/>
</dbReference>
<dbReference type="InterPro" id="IPR047089">
    <property type="entry name" value="Asp-tRNA-ligase_1_N"/>
</dbReference>
<dbReference type="InterPro" id="IPR002312">
    <property type="entry name" value="Asp/Asn-tRNA-synth_IIb"/>
</dbReference>
<dbReference type="InterPro" id="IPR004115">
    <property type="entry name" value="GAD-like_sf"/>
</dbReference>
<dbReference type="InterPro" id="IPR029351">
    <property type="entry name" value="GAD_dom"/>
</dbReference>
<dbReference type="InterPro" id="IPR012340">
    <property type="entry name" value="NA-bd_OB-fold"/>
</dbReference>
<dbReference type="InterPro" id="IPR004365">
    <property type="entry name" value="NA-bd_OB_tRNA"/>
</dbReference>
<dbReference type="NCBIfam" id="TIGR00459">
    <property type="entry name" value="aspS_bact"/>
    <property type="match status" value="1"/>
</dbReference>
<dbReference type="NCBIfam" id="NF001750">
    <property type="entry name" value="PRK00476.1"/>
    <property type="match status" value="1"/>
</dbReference>
<dbReference type="PANTHER" id="PTHR22594:SF5">
    <property type="entry name" value="ASPARTATE--TRNA LIGASE, MITOCHONDRIAL"/>
    <property type="match status" value="1"/>
</dbReference>
<dbReference type="PANTHER" id="PTHR22594">
    <property type="entry name" value="ASPARTYL/LYSYL-TRNA SYNTHETASE"/>
    <property type="match status" value="1"/>
</dbReference>
<dbReference type="Pfam" id="PF02938">
    <property type="entry name" value="GAD"/>
    <property type="match status" value="1"/>
</dbReference>
<dbReference type="Pfam" id="PF00152">
    <property type="entry name" value="tRNA-synt_2"/>
    <property type="match status" value="1"/>
</dbReference>
<dbReference type="Pfam" id="PF01336">
    <property type="entry name" value="tRNA_anti-codon"/>
    <property type="match status" value="1"/>
</dbReference>
<dbReference type="PRINTS" id="PR01042">
    <property type="entry name" value="TRNASYNTHASP"/>
</dbReference>
<dbReference type="SUPFAM" id="SSF55681">
    <property type="entry name" value="Class II aaRS and biotin synthetases"/>
    <property type="match status" value="1"/>
</dbReference>
<dbReference type="SUPFAM" id="SSF55261">
    <property type="entry name" value="GAD domain-like"/>
    <property type="match status" value="1"/>
</dbReference>
<dbReference type="SUPFAM" id="SSF50249">
    <property type="entry name" value="Nucleic acid-binding proteins"/>
    <property type="match status" value="1"/>
</dbReference>
<dbReference type="PROSITE" id="PS50862">
    <property type="entry name" value="AA_TRNA_LIGASE_II"/>
    <property type="match status" value="1"/>
</dbReference>
<comment type="function">
    <text evidence="1">Aspartyl-tRNA synthetase with relaxed tRNA specificity since it is able to aspartylate not only its cognate tRNA(Asp) but also tRNA(Asn). Reaction proceeds in two steps: L-aspartate is first activated by ATP to form Asp-AMP and then transferred to the acceptor end of tRNA(Asp/Asn).</text>
</comment>
<comment type="catalytic activity">
    <reaction evidence="1">
        <text>tRNA(Asx) + L-aspartate + ATP = L-aspartyl-tRNA(Asx) + AMP + diphosphate</text>
        <dbReference type="Rhea" id="RHEA:18349"/>
        <dbReference type="Rhea" id="RHEA-COMP:9710"/>
        <dbReference type="Rhea" id="RHEA-COMP:9711"/>
        <dbReference type="ChEBI" id="CHEBI:29991"/>
        <dbReference type="ChEBI" id="CHEBI:30616"/>
        <dbReference type="ChEBI" id="CHEBI:33019"/>
        <dbReference type="ChEBI" id="CHEBI:78442"/>
        <dbReference type="ChEBI" id="CHEBI:78516"/>
        <dbReference type="ChEBI" id="CHEBI:456215"/>
        <dbReference type="EC" id="6.1.1.23"/>
    </reaction>
</comment>
<comment type="subunit">
    <text evidence="1">Homodimer.</text>
</comment>
<comment type="subcellular location">
    <subcellularLocation>
        <location evidence="1">Cytoplasm</location>
    </subcellularLocation>
</comment>
<comment type="similarity">
    <text evidence="1">Belongs to the class-II aminoacyl-tRNA synthetase family. Type 1 subfamily.</text>
</comment>
<keyword id="KW-0030">Aminoacyl-tRNA synthetase</keyword>
<keyword id="KW-0067">ATP-binding</keyword>
<keyword id="KW-0963">Cytoplasm</keyword>
<keyword id="KW-0436">Ligase</keyword>
<keyword id="KW-0547">Nucleotide-binding</keyword>
<keyword id="KW-0648">Protein biosynthesis</keyword>
<feature type="chain" id="PRO_1000199006" description="Aspartate--tRNA(Asp/Asn) ligase">
    <location>
        <begin position="1"/>
        <end position="591"/>
    </location>
</feature>
<feature type="region of interest" description="Aspartate" evidence="1">
    <location>
        <begin position="199"/>
        <end position="202"/>
    </location>
</feature>
<feature type="binding site" evidence="1">
    <location>
        <position position="175"/>
    </location>
    <ligand>
        <name>L-aspartate</name>
        <dbReference type="ChEBI" id="CHEBI:29991"/>
    </ligand>
</feature>
<feature type="binding site" evidence="1">
    <location>
        <begin position="221"/>
        <end position="223"/>
    </location>
    <ligand>
        <name>ATP</name>
        <dbReference type="ChEBI" id="CHEBI:30616"/>
    </ligand>
</feature>
<feature type="binding site" evidence="1">
    <location>
        <position position="221"/>
    </location>
    <ligand>
        <name>L-aspartate</name>
        <dbReference type="ChEBI" id="CHEBI:29991"/>
    </ligand>
</feature>
<feature type="binding site" evidence="1">
    <location>
        <position position="453"/>
    </location>
    <ligand>
        <name>L-aspartate</name>
        <dbReference type="ChEBI" id="CHEBI:29991"/>
    </ligand>
</feature>
<feature type="binding site" evidence="1">
    <location>
        <position position="486"/>
    </location>
    <ligand>
        <name>ATP</name>
        <dbReference type="ChEBI" id="CHEBI:30616"/>
    </ligand>
</feature>
<feature type="binding site" evidence="1">
    <location>
        <position position="493"/>
    </location>
    <ligand>
        <name>L-aspartate</name>
        <dbReference type="ChEBI" id="CHEBI:29991"/>
    </ligand>
</feature>
<feature type="binding site" evidence="1">
    <location>
        <begin position="538"/>
        <end position="541"/>
    </location>
    <ligand>
        <name>ATP</name>
        <dbReference type="ChEBI" id="CHEBI:30616"/>
    </ligand>
</feature>
<feature type="site" description="Important for tRNA non-discrimination" evidence="1">
    <location>
        <position position="33"/>
    </location>
</feature>
<protein>
    <recommendedName>
        <fullName evidence="1">Aspartate--tRNA(Asp/Asn) ligase</fullName>
        <ecNumber evidence="1">6.1.1.23</ecNumber>
    </recommendedName>
    <alternativeName>
        <fullName evidence="1">Aspartyl-tRNA synthetase</fullName>
        <shortName evidence="1">AspRS</shortName>
    </alternativeName>
    <alternativeName>
        <fullName evidence="1">Non-discriminating aspartyl-tRNA synthetase</fullName>
        <shortName evidence="1">ND-AspRS</shortName>
    </alternativeName>
</protein>
<gene>
    <name evidence="1" type="primary">aspS</name>
    <name type="ordered locus">RSKD131_2178</name>
</gene>